<reference key="1">
    <citation type="journal article" date="1998" name="Genes Dev.">
        <title>Noggin-mediated antagonism of BMP signaling is required for growth and patterning of the neural tube and somite.</title>
        <authorList>
            <person name="McMahon J.A."/>
            <person name="Takada S."/>
            <person name="Zimmerman L.B."/>
            <person name="Fan C.-M."/>
            <person name="Harland R.M."/>
            <person name="McMahon A.P."/>
        </authorList>
    </citation>
    <scope>NUCLEOTIDE SEQUENCE [GENOMIC DNA]</scope>
    <scope>DEVELOPMENTAL STAGE</scope>
    <scope>FUNCTION</scope>
    <scope>DISRUPTION PHENOTYPE</scope>
    <source>
        <strain>129/Sv</strain>
    </source>
</reference>
<reference key="2">
    <citation type="journal article" date="1998" name="Science">
        <title>Noggin, cartilage morphogenesis, and joint formation in the mammalian skeleton.</title>
        <authorList>
            <person name="Brunet L.J."/>
            <person name="McMahon J.A."/>
            <person name="McMahon A.P."/>
            <person name="Harland R.M."/>
        </authorList>
    </citation>
    <scope>FUNCTION</scope>
    <scope>TISSUE SPECIFICITY</scope>
</reference>
<evidence type="ECO:0000250" key="1"/>
<evidence type="ECO:0000250" key="2">
    <source>
        <dbReference type="UniProtKB" id="Q13253"/>
    </source>
</evidence>
<evidence type="ECO:0000255" key="3"/>
<evidence type="ECO:0000256" key="4">
    <source>
        <dbReference type="SAM" id="MobiDB-lite"/>
    </source>
</evidence>
<evidence type="ECO:0000269" key="5">
    <source>
    </source>
</evidence>
<evidence type="ECO:0000269" key="6">
    <source>
    </source>
</evidence>
<evidence type="ECO:0000303" key="7">
    <source>
    </source>
</evidence>
<evidence type="ECO:0000303" key="8">
    <source>
    </source>
</evidence>
<evidence type="ECO:0000305" key="9"/>
<feature type="signal peptide" evidence="3">
    <location>
        <begin position="1"/>
        <end position="27"/>
    </location>
</feature>
<feature type="chain" id="PRO_0000019814" description="Noggin">
    <location>
        <begin position="28"/>
        <end position="232"/>
    </location>
</feature>
<feature type="region of interest" description="Disordered" evidence="4">
    <location>
        <begin position="77"/>
        <end position="99"/>
    </location>
</feature>
<feature type="glycosylation site" description="N-linked (GlcNAc...) asparagine" evidence="3">
    <location>
        <position position="62"/>
    </location>
</feature>
<feature type="disulfide bond" evidence="1">
    <location>
        <begin position="155"/>
        <end position="192"/>
    </location>
</feature>
<feature type="disulfide bond" evidence="1">
    <location>
        <begin position="178"/>
        <end position="228"/>
    </location>
</feature>
<feature type="disulfide bond" evidence="1">
    <location>
        <begin position="184"/>
        <end position="230"/>
    </location>
</feature>
<feature type="disulfide bond" evidence="1">
    <location>
        <begin position="207"/>
        <end position="215"/>
    </location>
</feature>
<name>NOGG_MOUSE</name>
<organism>
    <name type="scientific">Mus musculus</name>
    <name type="common">Mouse</name>
    <dbReference type="NCBI Taxonomy" id="10090"/>
    <lineage>
        <taxon>Eukaryota</taxon>
        <taxon>Metazoa</taxon>
        <taxon>Chordata</taxon>
        <taxon>Craniata</taxon>
        <taxon>Vertebrata</taxon>
        <taxon>Euteleostomi</taxon>
        <taxon>Mammalia</taxon>
        <taxon>Eutheria</taxon>
        <taxon>Euarchontoglires</taxon>
        <taxon>Glires</taxon>
        <taxon>Rodentia</taxon>
        <taxon>Myomorpha</taxon>
        <taxon>Muroidea</taxon>
        <taxon>Muridae</taxon>
        <taxon>Murinae</taxon>
        <taxon>Mus</taxon>
        <taxon>Mus</taxon>
    </lineage>
</organism>
<protein>
    <recommendedName>
        <fullName evidence="7 8">Noggin</fullName>
    </recommendedName>
</protein>
<dbReference type="EMBL" id="U79163">
    <property type="protein sequence ID" value="AAB38281.1"/>
    <property type="molecule type" value="Genomic_DNA"/>
</dbReference>
<dbReference type="CCDS" id="CCDS25236.1"/>
<dbReference type="RefSeq" id="NP_032737.1">
    <property type="nucleotide sequence ID" value="NM_008711.2"/>
</dbReference>
<dbReference type="SMR" id="P97466"/>
<dbReference type="FunCoup" id="P97466">
    <property type="interactions" value="128"/>
</dbReference>
<dbReference type="STRING" id="10090.ENSMUSP00000061427"/>
<dbReference type="GlyCosmos" id="P97466">
    <property type="glycosylation" value="1 site, No reported glycans"/>
</dbReference>
<dbReference type="GlyGen" id="P97466">
    <property type="glycosylation" value="1 site, 1 N-linked glycan (1 site)"/>
</dbReference>
<dbReference type="iPTMnet" id="P97466"/>
<dbReference type="PhosphoSitePlus" id="P97466"/>
<dbReference type="PaxDb" id="10090-ENSMUSP00000061427"/>
<dbReference type="ProteomicsDB" id="293589"/>
<dbReference type="Antibodypedia" id="3149">
    <property type="antibodies" value="574 antibodies from 35 providers"/>
</dbReference>
<dbReference type="DNASU" id="18121"/>
<dbReference type="Ensembl" id="ENSMUST00000061728.5">
    <property type="protein sequence ID" value="ENSMUSP00000061427.4"/>
    <property type="gene ID" value="ENSMUSG00000048616.5"/>
</dbReference>
<dbReference type="GeneID" id="18121"/>
<dbReference type="KEGG" id="mmu:18121"/>
<dbReference type="UCSC" id="uc007kwh.2">
    <property type="organism name" value="mouse"/>
</dbReference>
<dbReference type="AGR" id="MGI:104327"/>
<dbReference type="CTD" id="9241"/>
<dbReference type="MGI" id="MGI:104327">
    <property type="gene designation" value="Nog"/>
</dbReference>
<dbReference type="VEuPathDB" id="HostDB:ENSMUSG00000048616"/>
<dbReference type="eggNOG" id="KOG4485">
    <property type="taxonomic scope" value="Eukaryota"/>
</dbReference>
<dbReference type="GeneTree" id="ENSGT00390000006009"/>
<dbReference type="HOGENOM" id="CLU_085186_1_0_1"/>
<dbReference type="InParanoid" id="P97466"/>
<dbReference type="OMA" id="LWSHTFC"/>
<dbReference type="OrthoDB" id="5950649at2759"/>
<dbReference type="PhylomeDB" id="P97466"/>
<dbReference type="TreeFam" id="TF353745"/>
<dbReference type="Reactome" id="R-MMU-201451">
    <property type="pathway name" value="Signaling by BMP"/>
</dbReference>
<dbReference type="BioGRID-ORCS" id="18121">
    <property type="hits" value="1 hit in 76 CRISPR screens"/>
</dbReference>
<dbReference type="PRO" id="PR:P97466"/>
<dbReference type="Proteomes" id="UP000000589">
    <property type="component" value="Chromosome 11"/>
</dbReference>
<dbReference type="RNAct" id="P97466">
    <property type="molecule type" value="protein"/>
</dbReference>
<dbReference type="Bgee" id="ENSMUSG00000048616">
    <property type="expression patterns" value="Expressed in notochord and 106 other cell types or tissues"/>
</dbReference>
<dbReference type="ExpressionAtlas" id="P97466">
    <property type="expression patterns" value="baseline and differential"/>
</dbReference>
<dbReference type="GO" id="GO:0005576">
    <property type="term" value="C:extracellular region"/>
    <property type="evidence" value="ECO:0000304"/>
    <property type="project" value="Reactome"/>
</dbReference>
<dbReference type="GO" id="GO:0005615">
    <property type="term" value="C:extracellular space"/>
    <property type="evidence" value="ECO:0000314"/>
    <property type="project" value="MGI"/>
</dbReference>
<dbReference type="GO" id="GO:0098793">
    <property type="term" value="C:presynapse"/>
    <property type="evidence" value="ECO:0007669"/>
    <property type="project" value="GOC"/>
</dbReference>
<dbReference type="GO" id="GO:0019955">
    <property type="term" value="F:cytokine binding"/>
    <property type="evidence" value="ECO:0007669"/>
    <property type="project" value="Ensembl"/>
</dbReference>
<dbReference type="GO" id="GO:0042803">
    <property type="term" value="F:protein homodimerization activity"/>
    <property type="evidence" value="ECO:0007669"/>
    <property type="project" value="Ensembl"/>
</dbReference>
<dbReference type="GO" id="GO:0048646">
    <property type="term" value="P:anatomical structure formation involved in morphogenesis"/>
    <property type="evidence" value="ECO:0000315"/>
    <property type="project" value="MGI"/>
</dbReference>
<dbReference type="GO" id="GO:0055009">
    <property type="term" value="P:atrial cardiac muscle tissue morphogenesis"/>
    <property type="evidence" value="ECO:0000315"/>
    <property type="project" value="BHF-UCL"/>
</dbReference>
<dbReference type="GO" id="GO:0048318">
    <property type="term" value="P:axial mesoderm development"/>
    <property type="evidence" value="ECO:0000315"/>
    <property type="project" value="MGI"/>
</dbReference>
<dbReference type="GO" id="GO:0007411">
    <property type="term" value="P:axon guidance"/>
    <property type="evidence" value="ECO:0000315"/>
    <property type="project" value="MGI"/>
</dbReference>
<dbReference type="GO" id="GO:0030509">
    <property type="term" value="P:BMP signaling pathway"/>
    <property type="evidence" value="ECO:0000314"/>
    <property type="project" value="MGI"/>
</dbReference>
<dbReference type="GO" id="GO:0007420">
    <property type="term" value="P:brain development"/>
    <property type="evidence" value="ECO:0000315"/>
    <property type="project" value="MGI"/>
</dbReference>
<dbReference type="GO" id="GO:0051216">
    <property type="term" value="P:cartilage development"/>
    <property type="evidence" value="ECO:0000314"/>
    <property type="project" value="MGI"/>
</dbReference>
<dbReference type="GO" id="GO:0021533">
    <property type="term" value="P:cell differentiation in hindbrain"/>
    <property type="evidence" value="ECO:0007669"/>
    <property type="project" value="Ensembl"/>
</dbReference>
<dbReference type="GO" id="GO:0008283">
    <property type="term" value="P:cell population proliferation"/>
    <property type="evidence" value="ECO:0000316"/>
    <property type="project" value="MGI"/>
</dbReference>
<dbReference type="GO" id="GO:0071773">
    <property type="term" value="P:cellular response to BMP stimulus"/>
    <property type="evidence" value="ECO:0000314"/>
    <property type="project" value="MGI"/>
</dbReference>
<dbReference type="GO" id="GO:0007417">
    <property type="term" value="P:central nervous system development"/>
    <property type="evidence" value="ECO:0000315"/>
    <property type="project" value="MGI"/>
</dbReference>
<dbReference type="GO" id="GO:1904888">
    <property type="term" value="P:cranial skeletal system development"/>
    <property type="evidence" value="ECO:0000316"/>
    <property type="project" value="MGI"/>
</dbReference>
<dbReference type="GO" id="GO:0009953">
    <property type="term" value="P:dorsal/ventral pattern formation"/>
    <property type="evidence" value="ECO:0007669"/>
    <property type="project" value="Ensembl"/>
</dbReference>
<dbReference type="GO" id="GO:0042733">
    <property type="term" value="P:embryonic digit morphogenesis"/>
    <property type="evidence" value="ECO:0007669"/>
    <property type="project" value="Ensembl"/>
</dbReference>
<dbReference type="GO" id="GO:0060272">
    <property type="term" value="P:embryonic skeletal joint morphogenesis"/>
    <property type="evidence" value="ECO:0007669"/>
    <property type="project" value="Ensembl"/>
</dbReference>
<dbReference type="GO" id="GO:0003272">
    <property type="term" value="P:endocardial cushion formation"/>
    <property type="evidence" value="ECO:0000315"/>
    <property type="project" value="BHF-UCL"/>
</dbReference>
<dbReference type="GO" id="GO:0007492">
    <property type="term" value="P:endoderm development"/>
    <property type="evidence" value="ECO:0000314"/>
    <property type="project" value="MGI"/>
</dbReference>
<dbReference type="GO" id="GO:0001706">
    <property type="term" value="P:endoderm formation"/>
    <property type="evidence" value="ECO:0000314"/>
    <property type="project" value="MGI"/>
</dbReference>
<dbReference type="GO" id="GO:0050673">
    <property type="term" value="P:epithelial cell proliferation"/>
    <property type="evidence" value="ECO:0000315"/>
    <property type="project" value="MGI"/>
</dbReference>
<dbReference type="GO" id="GO:0001837">
    <property type="term" value="P:epithelial to mesenchymal transition"/>
    <property type="evidence" value="ECO:0000315"/>
    <property type="project" value="BHF-UCL"/>
</dbReference>
<dbReference type="GO" id="GO:0035640">
    <property type="term" value="P:exploration behavior"/>
    <property type="evidence" value="ECO:0000315"/>
    <property type="project" value="MGI"/>
</dbReference>
<dbReference type="GO" id="GO:0060325">
    <property type="term" value="P:face morphogenesis"/>
    <property type="evidence" value="ECO:0000315"/>
    <property type="project" value="MGI"/>
</dbReference>
<dbReference type="GO" id="GO:0008543">
    <property type="term" value="P:fibroblast growth factor receptor signaling pathway"/>
    <property type="evidence" value="ECO:0000316"/>
    <property type="project" value="MGI"/>
</dbReference>
<dbReference type="GO" id="GO:0030900">
    <property type="term" value="P:forebrain development"/>
    <property type="evidence" value="ECO:0000316"/>
    <property type="project" value="MGI"/>
</dbReference>
<dbReference type="GO" id="GO:0061384">
    <property type="term" value="P:heart trabecula morphogenesis"/>
    <property type="evidence" value="ECO:0000315"/>
    <property type="project" value="BHF-UCL"/>
</dbReference>
<dbReference type="GO" id="GO:0001701">
    <property type="term" value="P:in utero embryonic development"/>
    <property type="evidence" value="ECO:0000315"/>
    <property type="project" value="MGI"/>
</dbReference>
<dbReference type="GO" id="GO:0060291">
    <property type="term" value="P:long-term synaptic potentiation"/>
    <property type="evidence" value="ECO:0000315"/>
    <property type="project" value="MGI"/>
</dbReference>
<dbReference type="GO" id="GO:0060425">
    <property type="term" value="P:lung morphogenesis"/>
    <property type="evidence" value="ECO:0000315"/>
    <property type="project" value="MGI"/>
</dbReference>
<dbReference type="GO" id="GO:0003149">
    <property type="term" value="P:membranous septum morphogenesis"/>
    <property type="evidence" value="ECO:0000315"/>
    <property type="project" value="BHF-UCL"/>
</dbReference>
<dbReference type="GO" id="GO:0048762">
    <property type="term" value="P:mesenchymal cell differentiation"/>
    <property type="evidence" value="ECO:0000315"/>
    <property type="project" value="MGI"/>
</dbReference>
<dbReference type="GO" id="GO:0001707">
    <property type="term" value="P:mesoderm formation"/>
    <property type="evidence" value="ECO:0000314"/>
    <property type="project" value="MGI"/>
</dbReference>
<dbReference type="GO" id="GO:0042474">
    <property type="term" value="P:middle ear morphogenesis"/>
    <property type="evidence" value="ECO:0007669"/>
    <property type="project" value="Ensembl"/>
</dbReference>
<dbReference type="GO" id="GO:0008045">
    <property type="term" value="P:motor neuron axon guidance"/>
    <property type="evidence" value="ECO:0000315"/>
    <property type="project" value="MGI"/>
</dbReference>
<dbReference type="GO" id="GO:2001234">
    <property type="term" value="P:negative regulation of apoptotic signaling pathway"/>
    <property type="evidence" value="ECO:0000315"/>
    <property type="project" value="MGI"/>
</dbReference>
<dbReference type="GO" id="GO:0048712">
    <property type="term" value="P:negative regulation of astrocyte differentiation"/>
    <property type="evidence" value="ECO:0000315"/>
    <property type="project" value="BHF-UCL"/>
</dbReference>
<dbReference type="GO" id="GO:0030514">
    <property type="term" value="P:negative regulation of BMP signaling pathway"/>
    <property type="evidence" value="ECO:0000314"/>
    <property type="project" value="HGNC-UCL"/>
</dbReference>
<dbReference type="GO" id="GO:0090090">
    <property type="term" value="P:negative regulation of canonical Wnt signaling pathway"/>
    <property type="evidence" value="ECO:0007669"/>
    <property type="project" value="Ensembl"/>
</dbReference>
<dbReference type="GO" id="GO:0062044">
    <property type="term" value="P:negative regulation of cardiac epithelial to mesenchymal transition"/>
    <property type="evidence" value="ECO:0000315"/>
    <property type="project" value="BHF-UCL"/>
</dbReference>
<dbReference type="GO" id="GO:0060044">
    <property type="term" value="P:negative regulation of cardiac muscle cell proliferation"/>
    <property type="evidence" value="ECO:0000315"/>
    <property type="project" value="BHF-UCL"/>
</dbReference>
<dbReference type="GO" id="GO:0061037">
    <property type="term" value="P:negative regulation of cartilage development"/>
    <property type="evidence" value="ECO:0000314"/>
    <property type="project" value="MGI"/>
</dbReference>
<dbReference type="GO" id="GO:0030336">
    <property type="term" value="P:negative regulation of cell migration"/>
    <property type="evidence" value="ECO:0007669"/>
    <property type="project" value="Ensembl"/>
</dbReference>
<dbReference type="GO" id="GO:0010629">
    <property type="term" value="P:negative regulation of gene expression"/>
    <property type="evidence" value="ECO:0000314"/>
    <property type="project" value="MGI"/>
</dbReference>
<dbReference type="GO" id="GO:0045668">
    <property type="term" value="P:negative regulation of osteoblast differentiation"/>
    <property type="evidence" value="ECO:0007669"/>
    <property type="project" value="Ensembl"/>
</dbReference>
<dbReference type="GO" id="GO:0060392">
    <property type="term" value="P:negative regulation of SMAD protein signal transduction"/>
    <property type="evidence" value="ECO:0007669"/>
    <property type="project" value="Ensembl"/>
</dbReference>
<dbReference type="GO" id="GO:0000122">
    <property type="term" value="P:negative regulation of transcription by RNA polymerase II"/>
    <property type="evidence" value="ECO:0000315"/>
    <property type="project" value="BHF-UCL"/>
</dbReference>
<dbReference type="GO" id="GO:0021999">
    <property type="term" value="P:neural plate anterior/posterior regionalization"/>
    <property type="evidence" value="ECO:0007669"/>
    <property type="project" value="Ensembl"/>
</dbReference>
<dbReference type="GO" id="GO:0001839">
    <property type="term" value="P:neural plate morphogenesis"/>
    <property type="evidence" value="ECO:0000315"/>
    <property type="project" value="MGI"/>
</dbReference>
<dbReference type="GO" id="GO:0001843">
    <property type="term" value="P:neural tube closure"/>
    <property type="evidence" value="ECO:0000315"/>
    <property type="project" value="MGI"/>
</dbReference>
<dbReference type="GO" id="GO:0021915">
    <property type="term" value="P:neural tube development"/>
    <property type="evidence" value="ECO:0000315"/>
    <property type="project" value="MGI"/>
</dbReference>
<dbReference type="GO" id="GO:0038092">
    <property type="term" value="P:nodal signaling pathway"/>
    <property type="evidence" value="ECO:0007669"/>
    <property type="project" value="Ensembl"/>
</dbReference>
<dbReference type="GO" id="GO:0048570">
    <property type="term" value="P:notochord morphogenesis"/>
    <property type="evidence" value="ECO:0000315"/>
    <property type="project" value="MGI"/>
</dbReference>
<dbReference type="GO" id="GO:0001649">
    <property type="term" value="P:osteoblast differentiation"/>
    <property type="evidence" value="ECO:0000315"/>
    <property type="project" value="BHF-UCL"/>
</dbReference>
<dbReference type="GO" id="GO:0003151">
    <property type="term" value="P:outflow tract morphogenesis"/>
    <property type="evidence" value="ECO:0000315"/>
    <property type="project" value="BHF-UCL"/>
</dbReference>
<dbReference type="GO" id="GO:0007389">
    <property type="term" value="P:pattern specification process"/>
    <property type="evidence" value="ECO:0000315"/>
    <property type="project" value="MGI"/>
</dbReference>
<dbReference type="GO" id="GO:0061626">
    <property type="term" value="P:pharyngeal arch artery morphogenesis"/>
    <property type="evidence" value="ECO:0000315"/>
    <property type="project" value="BHF-UCL"/>
</dbReference>
<dbReference type="GO" id="GO:0021983">
    <property type="term" value="P:pituitary gland development"/>
    <property type="evidence" value="ECO:0000315"/>
    <property type="project" value="MGI"/>
</dbReference>
<dbReference type="GO" id="GO:0090190">
    <property type="term" value="P:positive regulation of branching involved in ureteric bud morphogenesis"/>
    <property type="evidence" value="ECO:0000314"/>
    <property type="project" value="UniProtKB"/>
</dbReference>
<dbReference type="GO" id="GO:0050679">
    <property type="term" value="P:positive regulation of epithelial cell proliferation"/>
    <property type="evidence" value="ECO:0000315"/>
    <property type="project" value="MGI"/>
</dbReference>
<dbReference type="GO" id="GO:0010628">
    <property type="term" value="P:positive regulation of gene expression"/>
    <property type="evidence" value="ECO:0000315"/>
    <property type="project" value="BHF-UCL"/>
</dbReference>
<dbReference type="GO" id="GO:0090193">
    <property type="term" value="P:positive regulation of glomerulus development"/>
    <property type="evidence" value="ECO:0000314"/>
    <property type="project" value="UniProtKB"/>
</dbReference>
<dbReference type="GO" id="GO:0045944">
    <property type="term" value="P:positive regulation of transcription by RNA polymerase II"/>
    <property type="evidence" value="ECO:0000314"/>
    <property type="project" value="MGI"/>
</dbReference>
<dbReference type="GO" id="GO:0099171">
    <property type="term" value="P:presynaptic modulation of chemical synaptic transmission"/>
    <property type="evidence" value="ECO:0000314"/>
    <property type="project" value="MGI"/>
</dbReference>
<dbReference type="GO" id="GO:0060513">
    <property type="term" value="P:prostatic bud formation"/>
    <property type="evidence" value="ECO:0000315"/>
    <property type="project" value="MGI"/>
</dbReference>
<dbReference type="GO" id="GO:0030510">
    <property type="term" value="P:regulation of BMP signaling pathway"/>
    <property type="evidence" value="ECO:0000315"/>
    <property type="project" value="MGI"/>
</dbReference>
<dbReference type="GO" id="GO:0040036">
    <property type="term" value="P:regulation of fibroblast growth factor receptor signaling pathway"/>
    <property type="evidence" value="ECO:0007669"/>
    <property type="project" value="Ensembl"/>
</dbReference>
<dbReference type="GO" id="GO:0048168">
    <property type="term" value="P:regulation of neuronal synaptic plasticity"/>
    <property type="evidence" value="ECO:0000315"/>
    <property type="project" value="MGI"/>
</dbReference>
<dbReference type="GO" id="GO:1990926">
    <property type="term" value="P:short-term synaptic potentiation"/>
    <property type="evidence" value="ECO:0000315"/>
    <property type="project" value="MGI"/>
</dbReference>
<dbReference type="GO" id="GO:0001501">
    <property type="term" value="P:skeletal system development"/>
    <property type="evidence" value="ECO:0000315"/>
    <property type="project" value="MGI"/>
</dbReference>
<dbReference type="GO" id="GO:0007224">
    <property type="term" value="P:smoothened signaling pathway"/>
    <property type="evidence" value="ECO:0000316"/>
    <property type="project" value="MGI"/>
</dbReference>
<dbReference type="GO" id="GO:0035019">
    <property type="term" value="P:somatic stem cell population maintenance"/>
    <property type="evidence" value="ECO:0007669"/>
    <property type="project" value="Ensembl"/>
</dbReference>
<dbReference type="GO" id="GO:0061053">
    <property type="term" value="P:somite development"/>
    <property type="evidence" value="ECO:0000315"/>
    <property type="project" value="MGI"/>
</dbReference>
<dbReference type="GO" id="GO:0042305">
    <property type="term" value="P:specification of segmental identity, mandibular segment"/>
    <property type="evidence" value="ECO:0000316"/>
    <property type="project" value="MGI"/>
</dbReference>
<dbReference type="GO" id="GO:0021510">
    <property type="term" value="P:spinal cord development"/>
    <property type="evidence" value="ECO:0000315"/>
    <property type="project" value="MGI"/>
</dbReference>
<dbReference type="GO" id="GO:0048863">
    <property type="term" value="P:stem cell differentiation"/>
    <property type="evidence" value="ECO:0000315"/>
    <property type="project" value="MGI"/>
</dbReference>
<dbReference type="GO" id="GO:0001657">
    <property type="term" value="P:ureteric bud development"/>
    <property type="evidence" value="ECO:0000314"/>
    <property type="project" value="MGI"/>
</dbReference>
<dbReference type="GO" id="GO:0060676">
    <property type="term" value="P:ureteric bud formation"/>
    <property type="evidence" value="ECO:0000314"/>
    <property type="project" value="UniProtKB"/>
</dbReference>
<dbReference type="GO" id="GO:0001655">
    <property type="term" value="P:urogenital system development"/>
    <property type="evidence" value="ECO:0000315"/>
    <property type="project" value="MGI"/>
</dbReference>
<dbReference type="GO" id="GO:0003223">
    <property type="term" value="P:ventricular compact myocardium morphogenesis"/>
    <property type="evidence" value="ECO:0000315"/>
    <property type="project" value="BHF-UCL"/>
</dbReference>
<dbReference type="GO" id="GO:0060412">
    <property type="term" value="P:ventricular septum morphogenesis"/>
    <property type="evidence" value="ECO:0000315"/>
    <property type="project" value="BHF-UCL"/>
</dbReference>
<dbReference type="GO" id="GO:0008542">
    <property type="term" value="P:visual learning"/>
    <property type="evidence" value="ECO:0000315"/>
    <property type="project" value="MGI"/>
</dbReference>
<dbReference type="GO" id="GO:0042060">
    <property type="term" value="P:wound healing"/>
    <property type="evidence" value="ECO:0000315"/>
    <property type="project" value="BHF-UCL"/>
</dbReference>
<dbReference type="FunFam" id="1.10.287.520:FF:000001">
    <property type="entry name" value="Noggin"/>
    <property type="match status" value="1"/>
</dbReference>
<dbReference type="Gene3D" id="2.10.90.10">
    <property type="entry name" value="Cystine-knot cytokines"/>
    <property type="match status" value="1"/>
</dbReference>
<dbReference type="Gene3D" id="1.10.287.520">
    <property type="entry name" value="Helix hairpin bin"/>
    <property type="match status" value="1"/>
</dbReference>
<dbReference type="InterPro" id="IPR029034">
    <property type="entry name" value="Cystine-knot_cytokine"/>
</dbReference>
<dbReference type="InterPro" id="IPR008717">
    <property type="entry name" value="Noggin"/>
</dbReference>
<dbReference type="PANTHER" id="PTHR10494">
    <property type="entry name" value="BONE MORPHOGENETIC PROTEIN INHIBITOR, NOGGIN"/>
    <property type="match status" value="1"/>
</dbReference>
<dbReference type="PANTHER" id="PTHR10494:SF5">
    <property type="entry name" value="NOGGIN"/>
    <property type="match status" value="1"/>
</dbReference>
<dbReference type="Pfam" id="PF05806">
    <property type="entry name" value="Noggin"/>
    <property type="match status" value="1"/>
</dbReference>
<dbReference type="PIRSF" id="PIRSF008129">
    <property type="entry name" value="Noggin"/>
    <property type="match status" value="1"/>
</dbReference>
<dbReference type="SUPFAM" id="SSF57501">
    <property type="entry name" value="Cystine-knot cytokines"/>
    <property type="match status" value="1"/>
</dbReference>
<sequence>MERCPSLGVTLYALVVVLGLRAAPAGGQHYLHIRPAPSDNLPLVDLIEHPDPIFDPKEKDLNETLLRSLLGGHYDPGFMATSPPEDRPGGGGGPAGGAEDLAELDQLLRQRPSGAMPSEIKGLEFSEGLAQGKKQRLSKKLRRKLQMWLWSQTFCPVLYAWNDLGSRFWPRYVKVGSCFSKRSCSVPEGMVCKPSKSVHLTVLRWRCQRRGGQRCGWIPIQYPIISECKCSC</sequence>
<keyword id="KW-0891">Chondrogenesis</keyword>
<keyword id="KW-0217">Developmental protein</keyword>
<keyword id="KW-0221">Differentiation</keyword>
<keyword id="KW-1015">Disulfide bond</keyword>
<keyword id="KW-0325">Glycoprotein</keyword>
<keyword id="KW-1185">Reference proteome</keyword>
<keyword id="KW-0964">Secreted</keyword>
<keyword id="KW-0732">Signal</keyword>
<proteinExistence type="evidence at transcript level"/>
<gene>
    <name type="primary">Nog</name>
</gene>
<comment type="function">
    <text evidence="2 5 6">Essential for cartilage morphogenesis and joint formation. Inhibitor of bone morphogenetic proteins (BMP) signaling which is required for growth and patterning of the neural tube and somite (PubMed:9585504, PubMed:9603738). Inhibits chondrocyte differentiation through its interaction with GDF5 and, probably, GDF6 (By similarity).</text>
</comment>
<comment type="subunit">
    <text evidence="2">Homodimer. Interacts with GDF5; inhibits chondrocyte differentiation.</text>
</comment>
<comment type="subcellular location">
    <subcellularLocation>
        <location>Secreted</location>
    </subcellularLocation>
</comment>
<comment type="tissue specificity">
    <text evidence="6">Expressed in condensing cartilage and immature chondrocytes.</text>
</comment>
<comment type="developmental stage">
    <text evidence="5">Embryonic expression was first detected in the node at 7.5 dpc. By early somite stages, expression extends anteriorly along the entire length of the notochord and is expressed in the dorsal neural tube from the caudal hindbrain to the posterior-most region of the embryo. By the time cranial tube closure is completed expression is continuous along most of the dorsal midline of the neural tube, to its rostral termination at the base of the forebrain. Expression in the neural tube and caudal notochord remains unchanged during early organogenesis from 9.5 dpc to 10.5 dpc.</text>
</comment>
<comment type="disruption phenotype">
    <text evidence="5">Defects in Nog are the cause of a recessive lethal phenotype at birth. Multiple defects include a failure of neural tube closure, broad club-shaped limbs, loss of caudal vertebrae, a shortened body axis, and retention of a small vestigial tail.</text>
</comment>
<comment type="similarity">
    <text evidence="9">Belongs to the noggin family.</text>
</comment>
<accession>P97466</accession>